<feature type="signal peptide" evidence="3">
    <location>
        <begin position="1"/>
        <end position="24"/>
    </location>
</feature>
<feature type="chain" id="PRO_5000064832" description="Procardosin-A" evidence="3">
    <location>
        <begin position="25"/>
        <end position="504"/>
    </location>
</feature>
<feature type="chain" id="PRO_0000394444" description="Cardosin-A intermediate form 35 kDa subunit" evidence="16">
    <location>
        <begin position="25"/>
        <end position="309"/>
    </location>
</feature>
<feature type="propeptide" id="PRO_0000394445" evidence="16">
    <location>
        <begin position="25"/>
        <end position="68"/>
    </location>
</feature>
<feature type="chain" id="PRO_5000064833" description="Cardosin-A heavy chain" evidence="16">
    <location>
        <begin position="69"/>
        <end position="309"/>
    </location>
</feature>
<feature type="chain" id="PRO_0000394446" description="Cardosin-A intermediate form 30 kDa subunit" evidence="16">
    <location>
        <begin position="310"/>
        <end position="504"/>
    </location>
</feature>
<feature type="propeptide" id="PRO_0000394447" description="Plant-specific insert" evidence="16">
    <location>
        <begin position="310"/>
        <end position="414"/>
    </location>
</feature>
<feature type="chain" id="PRO_5000064834" description="Cardosin-A light chain" evidence="16">
    <location>
        <begin position="415"/>
        <end position="504"/>
    </location>
</feature>
<feature type="domain" description="Peptidase A1" evidence="5">
    <location>
        <begin position="85"/>
        <end position="501"/>
    </location>
</feature>
<feature type="domain" description="Saposin B-type" evidence="1 4">
    <location>
        <begin position="311"/>
        <end position="416"/>
    </location>
</feature>
<feature type="short sequence motif" description="RGD motif" evidence="9">
    <location>
        <begin position="246"/>
        <end position="248"/>
    </location>
</feature>
<feature type="short sequence motif" description="KGE motif" evidence="9">
    <location>
        <begin position="455"/>
        <end position="457"/>
    </location>
</feature>
<feature type="active site" evidence="1 6">
    <location>
        <position position="103"/>
    </location>
</feature>
<feature type="active site" evidence="1 6">
    <location>
        <position position="286"/>
    </location>
</feature>
<feature type="site" description="Cleavage" evidence="16">
    <location>
        <begin position="68"/>
        <end position="69"/>
    </location>
</feature>
<feature type="site" description="Cleavage" evidence="16">
    <location>
        <begin position="309"/>
        <end position="310"/>
    </location>
</feature>
<feature type="site" description="Cleavage" evidence="16">
    <location>
        <begin position="414"/>
        <end position="415"/>
    </location>
</feature>
<feature type="glycosylation site" description="N-linked (GlcNAc...) asparagine" evidence="4 7 14">
    <location>
        <position position="139"/>
    </location>
</feature>
<feature type="glycosylation site" description="N-linked (GlcNAc...) asparagine" evidence="4 7 14">
    <location>
        <position position="432"/>
    </location>
</feature>
<feature type="disulfide bond" evidence="4 7">
    <location>
        <begin position="116"/>
        <end position="122"/>
    </location>
</feature>
<feature type="disulfide bond" evidence="4 7">
    <location>
        <begin position="277"/>
        <end position="281"/>
    </location>
</feature>
<feature type="disulfide bond" evidence="4">
    <location>
        <begin position="316"/>
        <end position="410"/>
    </location>
</feature>
<feature type="disulfide bond" evidence="4">
    <location>
        <begin position="341"/>
        <end position="382"/>
    </location>
</feature>
<feature type="disulfide bond" evidence="4">
    <location>
        <begin position="347"/>
        <end position="379"/>
    </location>
</feature>
<feature type="disulfide bond" evidence="4 7">
    <location>
        <begin position="424"/>
        <end position="461"/>
    </location>
</feature>
<feature type="sequence conflict" description="In Ref. 2; AA sequence." evidence="20" ref="2">
    <original>S</original>
    <variation>D</variation>
    <location>
        <position position="84"/>
    </location>
</feature>
<feature type="sequence conflict" description="In Ref. 2; AA sequence." evidence="20" ref="2">
    <original>GIG</original>
    <variation>PTQ</variation>
    <location>
        <begin position="90"/>
        <end position="92"/>
    </location>
</feature>
<feature type="sequence conflict" description="In Ref. 2; AA sequence." evidence="20" ref="2">
    <original>E</original>
    <variation>R</variation>
    <location>
        <position position="129"/>
    </location>
</feature>
<feature type="sequence conflict" description="In Ref. 2; AA sequence." evidence="20" ref="2">
    <original>DS</original>
    <variation>SF</variation>
    <location>
        <begin position="159"/>
        <end position="160"/>
    </location>
</feature>
<feature type="sequence conflict" description="In Ref. 2; AA sequence." evidence="20" ref="2">
    <original>I</original>
    <variation>K</variation>
    <location>
        <position position="163"/>
    </location>
</feature>
<feature type="sequence conflict" description="In Ref. 2; AA sequence." evidence="20" ref="2">
    <original>A</original>
    <variation>T</variation>
    <location>
        <position position="180"/>
    </location>
</feature>
<feature type="sequence conflict" description="In Ref. 2; AA sequence." evidence="20" ref="2">
    <original>YI</original>
    <variation>SY</variation>
    <location>
        <begin position="449"/>
        <end position="450"/>
    </location>
</feature>
<feature type="strand" evidence="23">
    <location>
        <begin position="73"/>
        <end position="80"/>
    </location>
</feature>
<feature type="turn" evidence="23">
    <location>
        <begin position="81"/>
        <end position="83"/>
    </location>
</feature>
<feature type="strand" evidence="23">
    <location>
        <begin position="84"/>
        <end position="91"/>
    </location>
</feature>
<feature type="turn" evidence="23">
    <location>
        <begin position="92"/>
        <end position="95"/>
    </location>
</feature>
<feature type="strand" evidence="23">
    <location>
        <begin position="96"/>
        <end position="103"/>
    </location>
</feature>
<feature type="strand" evidence="23">
    <location>
        <begin position="109"/>
        <end position="113"/>
    </location>
</feature>
<feature type="helix" evidence="23">
    <location>
        <begin position="120"/>
        <end position="123"/>
    </location>
</feature>
<feature type="helix" evidence="23">
    <location>
        <begin position="130"/>
        <end position="132"/>
    </location>
</feature>
<feature type="strand" evidence="23">
    <location>
        <begin position="137"/>
        <end position="146"/>
    </location>
</feature>
<feature type="strand" evidence="23">
    <location>
        <begin position="151"/>
        <end position="163"/>
    </location>
</feature>
<feature type="strand" evidence="23">
    <location>
        <begin position="166"/>
        <end position="179"/>
    </location>
</feature>
<feature type="helix" evidence="23">
    <location>
        <begin position="181"/>
        <end position="184"/>
    </location>
</feature>
<feature type="strand" evidence="23">
    <location>
        <begin position="191"/>
        <end position="194"/>
    </location>
</feature>
<feature type="strand" evidence="23">
    <location>
        <begin position="199"/>
        <end position="201"/>
    </location>
</feature>
<feature type="helix" evidence="23">
    <location>
        <begin position="204"/>
        <end position="210"/>
    </location>
</feature>
<feature type="strand" evidence="23">
    <location>
        <begin position="215"/>
        <end position="223"/>
    </location>
</feature>
<feature type="strand" evidence="23">
    <location>
        <begin position="228"/>
        <end position="230"/>
    </location>
</feature>
<feature type="strand" evidence="23">
    <location>
        <begin position="233"/>
        <end position="237"/>
    </location>
</feature>
<feature type="helix" evidence="23">
    <location>
        <begin position="242"/>
        <end position="244"/>
    </location>
</feature>
<feature type="strand" evidence="23">
    <location>
        <begin position="245"/>
        <end position="256"/>
    </location>
</feature>
<feature type="turn" evidence="23">
    <location>
        <begin position="257"/>
        <end position="260"/>
    </location>
</feature>
<feature type="strand" evidence="23">
    <location>
        <begin position="261"/>
        <end position="264"/>
    </location>
</feature>
<feature type="strand" evidence="23">
    <location>
        <begin position="267"/>
        <end position="269"/>
    </location>
</feature>
<feature type="turn" evidence="23">
    <location>
        <begin position="276"/>
        <end position="279"/>
    </location>
</feature>
<feature type="strand" evidence="23">
    <location>
        <begin position="281"/>
        <end position="285"/>
    </location>
</feature>
<feature type="strand" evidence="23">
    <location>
        <begin position="290"/>
        <end position="294"/>
    </location>
</feature>
<feature type="helix" evidence="23">
    <location>
        <begin position="296"/>
        <end position="305"/>
    </location>
</feature>
<feature type="helix" evidence="23">
    <location>
        <begin position="424"/>
        <end position="429"/>
    </location>
</feature>
<feature type="strand" evidence="23">
    <location>
        <begin position="433"/>
        <end position="437"/>
    </location>
</feature>
<feature type="strand" evidence="23">
    <location>
        <begin position="440"/>
        <end position="444"/>
    </location>
</feature>
<feature type="helix" evidence="23">
    <location>
        <begin position="446"/>
        <end position="449"/>
    </location>
</feature>
<feature type="strand" evidence="23">
    <location>
        <begin position="450"/>
        <end position="454"/>
    </location>
</feature>
<feature type="turn" evidence="23">
    <location>
        <begin position="456"/>
        <end position="458"/>
    </location>
</feature>
<feature type="strand" evidence="23">
    <location>
        <begin position="460"/>
        <end position="467"/>
    </location>
</feature>
<feature type="strand" evidence="23">
    <location>
        <begin position="471"/>
        <end position="479"/>
    </location>
</feature>
<feature type="helix" evidence="23">
    <location>
        <begin position="481"/>
        <end position="484"/>
    </location>
</feature>
<feature type="strand" evidence="23">
    <location>
        <begin position="487"/>
        <end position="492"/>
    </location>
</feature>
<feature type="turn" evidence="23">
    <location>
        <begin position="493"/>
        <end position="496"/>
    </location>
</feature>
<feature type="strand" evidence="23">
    <location>
        <begin position="497"/>
        <end position="503"/>
    </location>
</feature>
<gene>
    <name evidence="21" type="primary">cardA</name>
</gene>
<comment type="function">
    <text evidence="2 10 13">Aspartic proteinase with a high preference for bonds between hydrophobic residues. Cleaves alpha-lactalbumin but not beta-lactoglobulin.</text>
</comment>
<comment type="activity regulation">
    <text evidence="13">Inhibited by the specific aspartic proteinase inhibitors diazoacetyl-noleucine methyl ester and pepstatin.</text>
</comment>
<comment type="biophysicochemical properties">
    <kinetics>
        <KM evidence="13">0.64 mM for Leu-Ser-Phe(NO2)-Ahx-Ala-Leu</KM>
        <KM evidence="13">0.108 mM for Lys-Pro-Ala-Glu-Phe-Phe(NO2)-Ala-Leu</KM>
    </kinetics>
    <phDependence>
        <text evidence="13">Optimum pH is 5.0. Active from pH 2.0-7.0.</text>
    </phDependence>
    <temperatureDependence>
        <text evidence="13">Stable at temperatures of up to 60 degrees Celsius.</text>
    </temperatureDependence>
</comment>
<comment type="subunit">
    <text evidence="9 13 16">Heterodimer of a light chain and a heavy chain. An intermediate form (35 kDa and 30 kDa subunits) is produced first, and undergoes proteolytic processing to remove the internal plant-specific insert (PSI) and the propeptide. There is some heterogeniety at the cleavage site. Interacts (via RGD or KGE motifs) with PLD1 (via C2 domain).</text>
</comment>
<comment type="subcellular location">
    <subcellularLocation>
        <location evidence="8 11 15">Microsome membrane</location>
    </subcellularLocation>
    <subcellularLocation>
        <location evidence="8 11 15">Protein storage vacuole</location>
    </subcellularLocation>
    <subcellularLocation>
        <location evidence="8 11 15">Secreted</location>
        <location evidence="8 11 15">Cell wall</location>
    </subcellularLocation>
    <subcellularLocation>
        <location evidence="8 11 15">Secreted</location>
        <location evidence="8 11 15">Extracellular space</location>
        <location evidence="8 11 15">Extracellular matrix</location>
    </subcellularLocation>
    <text evidence="8 11 15">Procardosin-A is associated with the microsomal membranes, the mature form is secreted.</text>
</comment>
<comment type="tissue specificity">
    <text evidence="8 11 15">Detected only in pistils, not in seeds, roots, midribs, bracts, stamens, pollen, vascular or supporting tissues (PubMed:9362566). Detected in seeds (PubMed:18767217). High amounts are detected in the broad outer region of the upper portion of the stigma, towards the lower portion of the stigma it accumulates at the periphery. Within the stigma, expressed mainly in the epidermic papillae, lower levels are found in the cortical parenchyma. Present mainly in epidermal cells within the stye (at protein level). Expressed in young flower buds, and at lower levels in seeds, pollen and bracteas, but not in roots or leaves.</text>
</comment>
<comment type="developmental stage">
    <text evidence="8 11">Expressed at the first stages of flower development, and converted into its mature form as the flower matures, accumulating until the later stages of flower senescence. During flower development at the mRNA level, the highest expression is detected in closed capitula and no mRNA was detected at later stages of floral development. At the protein level, highest expression of mature cardosin-A is detected in fully opened capitula. Detected at mRNA level in the embryo fraction of dry seeds. Not detected in developing seeds until 72-84 hours of hydration, where it is detected in the embryo and remains in subsequent developmental stages. At protein level, the precursor form is detected in the hydrated seed until 120 hours, an intermediate form is detected at almost all stages, and the mature protein is detected until 60 hours and reappears before the seedling stage.</text>
</comment>
<comment type="PTM">
    <text evidence="7 14">N-glycosylated. Glycans found at Asn-139 include approximately 6% oligomannose, 82% oligosaccharides of the plant modified type with proximal fucose but without xylose and 6% oligosaccharides of the plant modified type with proximal fucose and xylose. Glycans found at Asn-432 include 14% oligosaccharides of the plant modified type with proximal fucose but without xylose and 86% oligosaccharides of the plant modified type with proximal fucose and xylose.</text>
</comment>
<comment type="mass spectrometry">
    <molecule>Cardosin-A heavy chain</molecule>
    <text>Heavy chain.</text>
</comment>
<comment type="mass spectrometry">
    <molecule>Cardosin-A light chain</molecule>
    <text>Light chain.</text>
</comment>
<comment type="similarity">
    <text evidence="3">Belongs to the peptidase A1 family.</text>
</comment>
<dbReference type="EC" id="3.4.23.-"/>
<dbReference type="EMBL" id="AJ132884">
    <property type="protein sequence ID" value="CAB40134.1"/>
    <property type="molecule type" value="mRNA"/>
</dbReference>
<dbReference type="PDB" id="1B5F">
    <property type="method" value="X-ray"/>
    <property type="resolution" value="1.72 A"/>
    <property type="chains" value="A/C=71-309, B/D=418-504"/>
</dbReference>
<dbReference type="PDBsum" id="1B5F"/>
<dbReference type="SMR" id="Q9XFX3"/>
<dbReference type="MEROPS" id="A01.020"/>
<dbReference type="GlyCosmos" id="Q9XFX3">
    <property type="glycosylation" value="2 sites, No reported glycans"/>
</dbReference>
<dbReference type="iPTMnet" id="Q9XFX3"/>
<dbReference type="BRENDA" id="3.4.23.40">
    <property type="organism ID" value="1789"/>
</dbReference>
<dbReference type="SABIO-RK" id="Q9XFX3"/>
<dbReference type="EvolutionaryTrace" id="Q9XFX3"/>
<dbReference type="GO" id="GO:0005783">
    <property type="term" value="C:endoplasmic reticulum"/>
    <property type="evidence" value="ECO:0007669"/>
    <property type="project" value="UniProtKB-KW"/>
</dbReference>
<dbReference type="GO" id="GO:0005576">
    <property type="term" value="C:extracellular region"/>
    <property type="evidence" value="ECO:0007669"/>
    <property type="project" value="UniProtKB-KW"/>
</dbReference>
<dbReference type="GO" id="GO:0016020">
    <property type="term" value="C:membrane"/>
    <property type="evidence" value="ECO:0007669"/>
    <property type="project" value="UniProtKB-KW"/>
</dbReference>
<dbReference type="GO" id="GO:0000326">
    <property type="term" value="C:protein storage vacuole"/>
    <property type="evidence" value="ECO:0007669"/>
    <property type="project" value="UniProtKB-SubCell"/>
</dbReference>
<dbReference type="GO" id="GO:0004190">
    <property type="term" value="F:aspartic-type endopeptidase activity"/>
    <property type="evidence" value="ECO:0007669"/>
    <property type="project" value="UniProtKB-KW"/>
</dbReference>
<dbReference type="GO" id="GO:0006629">
    <property type="term" value="P:lipid metabolic process"/>
    <property type="evidence" value="ECO:0007669"/>
    <property type="project" value="InterPro"/>
</dbReference>
<dbReference type="GO" id="GO:0006508">
    <property type="term" value="P:proteolysis"/>
    <property type="evidence" value="ECO:0007669"/>
    <property type="project" value="UniProtKB-KW"/>
</dbReference>
<dbReference type="FunFam" id="2.40.70.10:FF:000115">
    <property type="entry name" value="Lysosomal aspartic protease"/>
    <property type="match status" value="1"/>
</dbReference>
<dbReference type="Gene3D" id="2.40.70.10">
    <property type="entry name" value="Acid Proteases"/>
    <property type="match status" value="2"/>
</dbReference>
<dbReference type="Gene3D" id="1.10.225.10">
    <property type="entry name" value="Saposin-like"/>
    <property type="match status" value="1"/>
</dbReference>
<dbReference type="InterPro" id="IPR001461">
    <property type="entry name" value="Aspartic_peptidase_A1"/>
</dbReference>
<dbReference type="InterPro" id="IPR001969">
    <property type="entry name" value="Aspartic_peptidase_AS"/>
</dbReference>
<dbReference type="InterPro" id="IPR033121">
    <property type="entry name" value="PEPTIDASE_A1"/>
</dbReference>
<dbReference type="InterPro" id="IPR021109">
    <property type="entry name" value="Peptidase_aspartic_dom_sf"/>
</dbReference>
<dbReference type="InterPro" id="IPR007856">
    <property type="entry name" value="SapB_1"/>
</dbReference>
<dbReference type="InterPro" id="IPR008138">
    <property type="entry name" value="SapB_2"/>
</dbReference>
<dbReference type="InterPro" id="IPR011001">
    <property type="entry name" value="Saposin-like"/>
</dbReference>
<dbReference type="InterPro" id="IPR008139">
    <property type="entry name" value="SaposinB_dom"/>
</dbReference>
<dbReference type="PANTHER" id="PTHR47966:SF76">
    <property type="entry name" value="ASPARTIC PROTEINASE A1"/>
    <property type="match status" value="1"/>
</dbReference>
<dbReference type="PANTHER" id="PTHR47966">
    <property type="entry name" value="BETA-SITE APP-CLEAVING ENZYME, ISOFORM A-RELATED"/>
    <property type="match status" value="1"/>
</dbReference>
<dbReference type="Pfam" id="PF00026">
    <property type="entry name" value="Asp"/>
    <property type="match status" value="1"/>
</dbReference>
<dbReference type="Pfam" id="PF05184">
    <property type="entry name" value="SapB_1"/>
    <property type="match status" value="1"/>
</dbReference>
<dbReference type="Pfam" id="PF03489">
    <property type="entry name" value="SapB_2"/>
    <property type="match status" value="1"/>
</dbReference>
<dbReference type="PRINTS" id="PR00792">
    <property type="entry name" value="PEPSIN"/>
</dbReference>
<dbReference type="SUPFAM" id="SSF50630">
    <property type="entry name" value="Acid proteases"/>
    <property type="match status" value="1"/>
</dbReference>
<dbReference type="SUPFAM" id="SSF47862">
    <property type="entry name" value="Saposin"/>
    <property type="match status" value="1"/>
</dbReference>
<dbReference type="PROSITE" id="PS00141">
    <property type="entry name" value="ASP_PROTEASE"/>
    <property type="match status" value="1"/>
</dbReference>
<dbReference type="PROSITE" id="PS51767">
    <property type="entry name" value="PEPTIDASE_A1"/>
    <property type="match status" value="1"/>
</dbReference>
<dbReference type="PROSITE" id="PS50015">
    <property type="entry name" value="SAP_B"/>
    <property type="match status" value="2"/>
</dbReference>
<protein>
    <recommendedName>
        <fullName evidence="17 18 19">Procardosin-A</fullName>
        <ecNumber>3.4.23.-</ecNumber>
    </recommendedName>
    <component>
        <recommendedName>
            <fullName evidence="19">Cardosin-A intermediate form 35 kDa subunit</fullName>
        </recommendedName>
    </component>
    <component>
        <recommendedName>
            <fullName evidence="19">Cardosin-A heavy chain</fullName>
        </recommendedName>
        <alternativeName>
            <fullName evidence="19">Cardosin-A 31 kDa subunit</fullName>
        </alternativeName>
    </component>
    <component>
        <recommendedName>
            <fullName evidence="19">Cardosin-A intermediate form 30 kDa subunit</fullName>
        </recommendedName>
    </component>
    <component>
        <recommendedName>
            <fullName evidence="19">Cardosin-A light chain</fullName>
        </recommendedName>
        <alternativeName>
            <fullName evidence="19">Cardosin-A 15 kDa subunit</fullName>
        </alternativeName>
    </component>
</protein>
<sequence>MGTSIKANVLALFLFYLLSPTVFSVSDDGLIRIGLKKRKVDRIDQLRGRRALMEGNARKDFGFRGTVRDSGSAVVALTNDRDTSYFGEIGIGTPPQKFTVIFDTGSSVLWVPSSKCINSKACRAHSMYESSDSSTYKENGTFGAIIYGTGSITGFFSQDSVTIGDLVVKEQDFIEATDEADNVFLHRLFDGILGLSFQTISVPVWYNMLNQGLVKERRFSFWLNRNVDEEEGGELVFGGLDPNHFRGDHTYVPVTYQYYWQFGIGDVLIGDKSTGFCAPGCQAFADSGTSLLSGPTAIVTQINHAIGANGVMNQQCKTVVSRYGRDIIEMLRSKIQPDKICSHMKLCTFDGARDVSSIIESVVDKNNDKSSGGIHDEMCTFCEMAVVWMQNEIKQSETEDNIINYANELCEHLSTSSEELQVDCNTLSSMPNVSFTIGGKKFGLTPEQYILKVGKGEATQCISGFTAMDATLLGPLWILGDVFMRPYHTVFDYGNLLVGFAEAA</sequence>
<organism>
    <name type="scientific">Cynara cardunculus</name>
    <name type="common">Cardoon</name>
    <dbReference type="NCBI Taxonomy" id="4265"/>
    <lineage>
        <taxon>Eukaryota</taxon>
        <taxon>Viridiplantae</taxon>
        <taxon>Streptophyta</taxon>
        <taxon>Embryophyta</taxon>
        <taxon>Tracheophyta</taxon>
        <taxon>Spermatophyta</taxon>
        <taxon>Magnoliopsida</taxon>
        <taxon>eudicotyledons</taxon>
        <taxon>Gunneridae</taxon>
        <taxon>Pentapetalae</taxon>
        <taxon>asterids</taxon>
        <taxon>campanulids</taxon>
        <taxon>Asterales</taxon>
        <taxon>Asteraceae</taxon>
        <taxon>Carduoideae</taxon>
        <taxon>Cardueae</taxon>
        <taxon>Carduinae</taxon>
        <taxon>Cynara</taxon>
    </lineage>
</organism>
<keyword id="KW-0002">3D-structure</keyword>
<keyword id="KW-0064">Aspartyl protease</keyword>
<keyword id="KW-0134">Cell wall</keyword>
<keyword id="KW-0903">Direct protein sequencing</keyword>
<keyword id="KW-1015">Disulfide bond</keyword>
<keyword id="KW-0256">Endoplasmic reticulum</keyword>
<keyword id="KW-0272">Extracellular matrix</keyword>
<keyword id="KW-0325">Glycoprotein</keyword>
<keyword id="KW-0378">Hydrolase</keyword>
<keyword id="KW-0472">Membrane</keyword>
<keyword id="KW-0492">Microsome</keyword>
<keyword id="KW-0645">Protease</keyword>
<keyword id="KW-0964">Secreted</keyword>
<keyword id="KW-0732">Signal</keyword>
<keyword id="KW-0926">Vacuole</keyword>
<keyword id="KW-0865">Zymogen</keyword>
<name>CARDA_CYNCA</name>
<proteinExistence type="evidence at protein level"/>
<reference evidence="21" key="1">
    <citation type="journal article" date="1999" name="J. Biol. Chem.">
        <title>Cloning and characterization of cDNA encoding cardosin A, an RGD-containing plant aspartic proteinase.</title>
        <authorList>
            <person name="Faro C."/>
            <person name="Ramalho-Santos M."/>
            <person name="Vieira M."/>
            <person name="Mendes A."/>
            <person name="Simoes I."/>
            <person name="Andrade R."/>
            <person name="Verissimo P."/>
            <person name="Lin X."/>
            <person name="Tang J."/>
            <person name="Pires E."/>
        </authorList>
    </citation>
    <scope>NUCLEOTIDE SEQUENCE [MRNA]</scope>
    <scope>SUBCELLULAR LOCATION</scope>
    <scope>TISSUE SPECIFICITY</scope>
    <scope>DEVELOPMENTAL STAGE</scope>
    <source>
        <tissue evidence="8">Flower bud</tissue>
    </source>
</reference>
<reference evidence="20" key="2">
    <citation type="journal article" date="1996" name="Eur. J. Biochem.">
        <title>Purification, characterization and partial amino acid sequencing of two new aspartic proteinases from fresh flowers of Cynara cardunculus L.</title>
        <authorList>
            <person name="Verissimo P."/>
            <person name="Faro C."/>
            <person name="Moir A.J."/>
            <person name="Lin Y."/>
            <person name="Tang J."/>
            <person name="Pires E."/>
        </authorList>
    </citation>
    <scope>PROTEIN SEQUENCE OF 69-93; 129-136; 157-164; 170-185; 208-222; 238-256 AND 415-450</scope>
    <scope>FUNCTION</scope>
    <scope>ACTIVITY REGULATION</scope>
    <scope>BIOPHYSICOCHEMICAL PROPERTIES</scope>
    <scope>SUBUNIT</scope>
    <source>
        <tissue evidence="13">Stigma</tissue>
    </source>
</reference>
<reference evidence="20" key="3">
    <citation type="journal article" date="1998" name="Eur. J. Biochem.">
        <title>Identification and proteolytic processing of procardosin A.</title>
        <authorList>
            <person name="Ramalho-Santos M."/>
            <person name="Verissimo P."/>
            <person name="Cortes L."/>
            <person name="Samyn B."/>
            <person name="Van Beeumen J."/>
            <person name="Pires E."/>
            <person name="Faro C."/>
        </authorList>
    </citation>
    <scope>PROTEIN SEQUENCE OF 69-73; 307-313; 415-419 AND 498-505</scope>
    <scope>PROTEOLYTIC PROCESSING</scope>
    <source>
        <tissue evidence="16">Pistil</tissue>
    </source>
</reference>
<reference evidence="20" key="4">
    <citation type="journal article" date="1997" name="Eur. J. Biochem.">
        <title>The glycosylation of the aspartic proteinases from barley (Hordeum vulgare L.) and cardoon (Cynara cardunculus L.).</title>
        <authorList>
            <person name="Costa J."/>
            <person name="Ashford D.A."/>
            <person name="Nimtz M."/>
            <person name="Bento I."/>
            <person name="Frazao C."/>
            <person name="Esteves C.L."/>
            <person name="Faro C.J."/>
            <person name="Kervinen J."/>
            <person name="Pires E."/>
            <person name="Verissimo P."/>
            <person name="Wlodawer A."/>
            <person name="Carrondo M.A."/>
        </authorList>
    </citation>
    <scope>GLYCOSYLATION AT ASN-139 AND ASN-432</scope>
</reference>
<reference evidence="20" key="5">
    <citation type="journal article" date="1997" name="Planta">
        <title>Cardosin A, an abundant aspartic proteinase, accumulates in protein storage vacuoles in the stigmatic papillae of Cynara cardunculus L.</title>
        <authorList>
            <person name="Ramalho-Santos M."/>
            <person name="Pissarra J."/>
            <person name="Verissimo P."/>
            <person name="Pereira S."/>
            <person name="Salema R."/>
            <person name="Pires E."/>
            <person name="Faro C.J."/>
        </authorList>
    </citation>
    <scope>SUBCELLULAR LOCATION</scope>
    <scope>TISSUE SPECIFICITY</scope>
</reference>
<reference evidence="20" key="6">
    <citation type="journal article" date="2005" name="FEBS J.">
        <title>Molecular analysis of the interaction between cardosin A and phospholipase D(alpha). Identification of RGD/KGE sequences as binding motifs for C2 domains.</title>
        <authorList>
            <person name="Simoes I."/>
            <person name="Mueller E.C."/>
            <person name="Otto A."/>
            <person name="Bur D."/>
            <person name="Cheung A.Y."/>
            <person name="Faro C."/>
            <person name="Pires E."/>
        </authorList>
    </citation>
    <scope>INTERACTION WITH PLD1</scope>
</reference>
<reference evidence="20" key="7">
    <citation type="journal article" date="2006" name="J. Dairy Sci.">
        <title>Molecular characterization of peptides released from beta-lactoglobulin and alpha-lactalbumin via cardosins A and B.</title>
        <authorList>
            <person name="Barros R.M."/>
            <person name="Malcata F.X."/>
        </authorList>
    </citation>
    <scope>FUNCTION</scope>
</reference>
<reference evidence="20" key="8">
    <citation type="journal article" date="2008" name="Protoplasma">
        <title>Cardosins in postembryonic development of cardoon: towards an elucidation of the biological function of plant aspartic proteinases.</title>
        <authorList>
            <person name="Pereira C.S."/>
            <person name="da Costa D.S."/>
            <person name="Pereira S."/>
            <person name="Nogueira Fde M."/>
            <person name="Albuquerque P.M."/>
            <person name="Teixeira J."/>
            <person name="Faro C."/>
            <person name="Pissarra J."/>
        </authorList>
    </citation>
    <scope>SUBCELLULAR LOCATION</scope>
    <scope>TISSUE SPECIFICITY</scope>
    <scope>DEVELOPMENTAL STAGE</scope>
</reference>
<reference evidence="20" key="9">
    <citation type="journal article" date="2009" name="Planta">
        <title>Multiplicity of aspartic proteinases from Cynara cardunculus L.</title>
        <authorList>
            <person name="Sarmento A.C."/>
            <person name="Lopes H."/>
            <person name="Oliveira C.S."/>
            <person name="Vitorino R."/>
            <person name="Samyn B."/>
            <person name="Sergeant K."/>
            <person name="Debyser G."/>
            <person name="Van Beeumen J."/>
            <person name="Domingues P."/>
            <person name="Amado F."/>
            <person name="Pires E."/>
            <person name="Domingues M.R."/>
            <person name="Barros M.T."/>
        </authorList>
    </citation>
    <scope>MASS SPECTROMETRY</scope>
</reference>
<reference evidence="20 22" key="10">
    <citation type="journal article" date="1999" name="J. Biol. Chem.">
        <title>Crystal structure of cardosin A, a glycosylated and Arg-Gly-Asp-containing aspartic proteinase from the flowers of Cynara cardunculus L.</title>
        <authorList>
            <person name="Frazao C."/>
            <person name="Bento I."/>
            <person name="Costa J."/>
            <person name="Soares C.M."/>
            <person name="Verissimo P."/>
            <person name="Faro C."/>
            <person name="Pires E."/>
            <person name="Cooper J."/>
            <person name="Carrondo M.A."/>
        </authorList>
    </citation>
    <scope>X-RAY CRYSTALLOGRAPHY (1.72 ANGSTROMS) OF 71-309 AND 418-504</scope>
    <scope>DISULFIDE BONDS</scope>
    <scope>GLYCOSYLATION AT ASN-139 AND ASN-432</scope>
</reference>
<accession>Q9XFX3</accession>
<evidence type="ECO:0000250" key="1">
    <source>
        <dbReference type="UniProtKB" id="P42210"/>
    </source>
</evidence>
<evidence type="ECO:0000250" key="2">
    <source>
        <dbReference type="UniProtKB" id="P85136"/>
    </source>
</evidence>
<evidence type="ECO:0000255" key="3"/>
<evidence type="ECO:0000255" key="4">
    <source>
        <dbReference type="PROSITE-ProRule" id="PRU00415"/>
    </source>
</evidence>
<evidence type="ECO:0000255" key="5">
    <source>
        <dbReference type="PROSITE-ProRule" id="PRU01103"/>
    </source>
</evidence>
<evidence type="ECO:0000255" key="6">
    <source>
        <dbReference type="PROSITE-ProRule" id="PRU10094"/>
    </source>
</evidence>
<evidence type="ECO:0000269" key="7">
    <source>
    </source>
</evidence>
<evidence type="ECO:0000269" key="8">
    <source>
    </source>
</evidence>
<evidence type="ECO:0000269" key="9">
    <source>
    </source>
</evidence>
<evidence type="ECO:0000269" key="10">
    <source>
    </source>
</evidence>
<evidence type="ECO:0000269" key="11">
    <source>
    </source>
</evidence>
<evidence type="ECO:0000269" key="12">
    <source>
    </source>
</evidence>
<evidence type="ECO:0000269" key="13">
    <source>
    </source>
</evidence>
<evidence type="ECO:0000269" key="14">
    <source>
    </source>
</evidence>
<evidence type="ECO:0000269" key="15">
    <source>
    </source>
</evidence>
<evidence type="ECO:0000269" key="16">
    <source>
    </source>
</evidence>
<evidence type="ECO:0000303" key="17">
    <source>
    </source>
</evidence>
<evidence type="ECO:0000303" key="18">
    <source>
    </source>
</evidence>
<evidence type="ECO:0000303" key="19">
    <source>
    </source>
</evidence>
<evidence type="ECO:0000305" key="20"/>
<evidence type="ECO:0000312" key="21">
    <source>
        <dbReference type="EMBL" id="CAB40134.1"/>
    </source>
</evidence>
<evidence type="ECO:0000312" key="22">
    <source>
        <dbReference type="PDB" id="1B5F"/>
    </source>
</evidence>
<evidence type="ECO:0007829" key="23">
    <source>
        <dbReference type="PDB" id="1B5F"/>
    </source>
</evidence>